<accession>P66914</accession>
<accession>A0A1R3XVH0</accession>
<accession>P96268</accession>
<accession>X2BF06</accession>
<protein>
    <recommendedName>
        <fullName>Hydroxymethylpyrimidine/phosphomethylpyrimidine kinase</fullName>
        <ecNumber evidence="2">2.7.1.49</ecNumber>
        <ecNumber evidence="2">2.7.4.7</ecNumber>
    </recommendedName>
    <alternativeName>
        <fullName>Hydroxymethylpyrimidine kinase</fullName>
        <shortName>HMP kinase</shortName>
    </alternativeName>
    <alternativeName>
        <fullName>Hydroxymethylpyrimidine phosphate kinase</fullName>
        <shortName>HMP-P kinase</shortName>
        <shortName>HMP-phosphate kinase</shortName>
        <shortName>HMPP kinase</shortName>
    </alternativeName>
</protein>
<comment type="function">
    <text evidence="2">Catalyzes the phosphorylation of hydroxymethylpyrimidine phosphate (HMP-P) to HMP-PP, and of HMP to HMP-P.</text>
</comment>
<comment type="catalytic activity">
    <reaction evidence="2">
        <text>4-amino-5-hydroxymethyl-2-methylpyrimidine + ATP = 4-amino-2-methyl-5-(phosphooxymethyl)pyrimidine + ADP + H(+)</text>
        <dbReference type="Rhea" id="RHEA:23096"/>
        <dbReference type="ChEBI" id="CHEBI:15378"/>
        <dbReference type="ChEBI" id="CHEBI:16892"/>
        <dbReference type="ChEBI" id="CHEBI:30616"/>
        <dbReference type="ChEBI" id="CHEBI:58354"/>
        <dbReference type="ChEBI" id="CHEBI:456216"/>
        <dbReference type="EC" id="2.7.1.49"/>
    </reaction>
</comment>
<comment type="catalytic activity">
    <reaction evidence="2">
        <text>4-amino-2-methyl-5-(phosphooxymethyl)pyrimidine + ATP = 4-amino-2-methyl-5-(diphosphooxymethyl)pyrimidine + ADP</text>
        <dbReference type="Rhea" id="RHEA:19893"/>
        <dbReference type="ChEBI" id="CHEBI:30616"/>
        <dbReference type="ChEBI" id="CHEBI:57841"/>
        <dbReference type="ChEBI" id="CHEBI:58354"/>
        <dbReference type="ChEBI" id="CHEBI:456216"/>
        <dbReference type="EC" id="2.7.4.7"/>
    </reaction>
</comment>
<comment type="pathway">
    <text>Cofactor biosynthesis; thiamine diphosphate biosynthesis; 4-amino-2-methyl-5-diphosphomethylpyrimidine from 5-amino-1-(5-phospho-D-ribosyl)imidazole: step 2/3.</text>
</comment>
<comment type="pathway">
    <text>Cofactor biosynthesis; thiamine diphosphate biosynthesis; 4-amino-2-methyl-5-diphosphomethylpyrimidine from 5-amino-1-(5-phospho-D-ribosyl)imidazole: step 3/3.</text>
</comment>
<comment type="similarity">
    <text evidence="4">Belongs to the ThiD family.</text>
</comment>
<comment type="sequence caution" evidence="3">
    <conflict type="erroneous initiation">
        <sequence resource="EMBL-CDS" id="SIT99010"/>
    </conflict>
    <text>Truncated N-terminus.</text>
</comment>
<reference key="1">
    <citation type="journal article" date="2003" name="Proc. Natl. Acad. Sci. U.S.A.">
        <title>The complete genome sequence of Mycobacterium bovis.</title>
        <authorList>
            <person name="Garnier T."/>
            <person name="Eiglmeier K."/>
            <person name="Camus J.-C."/>
            <person name="Medina N."/>
            <person name="Mansoor H."/>
            <person name="Pryor M."/>
            <person name="Duthoy S."/>
            <person name="Grondin S."/>
            <person name="Lacroix C."/>
            <person name="Monsempe C."/>
            <person name="Simon S."/>
            <person name="Harris B."/>
            <person name="Atkin R."/>
            <person name="Doggett J."/>
            <person name="Mayes R."/>
            <person name="Keating L."/>
            <person name="Wheeler P.R."/>
            <person name="Parkhill J."/>
            <person name="Barrell B.G."/>
            <person name="Cole S.T."/>
            <person name="Gordon S.V."/>
            <person name="Hewinson R.G."/>
        </authorList>
    </citation>
    <scope>NUCLEOTIDE SEQUENCE [LARGE SCALE GENOMIC DNA]</scope>
    <source>
        <strain>ATCC BAA-935 / AF2122/97</strain>
    </source>
</reference>
<reference key="2">
    <citation type="journal article" date="2017" name="Genome Announc.">
        <title>Updated reference genome sequence and annotation of Mycobacterium bovis AF2122/97.</title>
        <authorList>
            <person name="Malone K.M."/>
            <person name="Farrell D."/>
            <person name="Stuber T.P."/>
            <person name="Schubert O.T."/>
            <person name="Aebersold R."/>
            <person name="Robbe-Austerman S."/>
            <person name="Gordon S.V."/>
        </authorList>
    </citation>
    <scope>NUCLEOTIDE SEQUENCE [LARGE SCALE GENOMIC DNA]</scope>
    <scope>GENOME REANNOTATION</scope>
    <source>
        <strain>ATCC BAA-935 / AF2122/97</strain>
    </source>
</reference>
<proteinExistence type="inferred from homology"/>
<dbReference type="EC" id="2.7.1.49" evidence="2"/>
<dbReference type="EC" id="2.7.4.7" evidence="2"/>
<dbReference type="EMBL" id="LT708304">
    <property type="protein sequence ID" value="SIT99010.1"/>
    <property type="status" value="ALT_INIT"/>
    <property type="molecule type" value="Genomic_DNA"/>
</dbReference>
<dbReference type="RefSeq" id="WP_003898443.1">
    <property type="nucleotide sequence ID" value="NC_002945.4"/>
</dbReference>
<dbReference type="SMR" id="P66914"/>
<dbReference type="PATRIC" id="fig|233413.5.peg.469"/>
<dbReference type="UniPathway" id="UPA00060">
    <property type="reaction ID" value="UER00137"/>
</dbReference>
<dbReference type="UniPathway" id="UPA00060">
    <property type="reaction ID" value="UER00138"/>
</dbReference>
<dbReference type="Proteomes" id="UP000001419">
    <property type="component" value="Chromosome"/>
</dbReference>
<dbReference type="GO" id="GO:0005829">
    <property type="term" value="C:cytosol"/>
    <property type="evidence" value="ECO:0007669"/>
    <property type="project" value="TreeGrafter"/>
</dbReference>
<dbReference type="GO" id="GO:0005524">
    <property type="term" value="F:ATP binding"/>
    <property type="evidence" value="ECO:0007669"/>
    <property type="project" value="UniProtKB-KW"/>
</dbReference>
<dbReference type="GO" id="GO:0008902">
    <property type="term" value="F:hydroxymethylpyrimidine kinase activity"/>
    <property type="evidence" value="ECO:0007669"/>
    <property type="project" value="UniProtKB-EC"/>
</dbReference>
<dbReference type="GO" id="GO:0008972">
    <property type="term" value="F:phosphomethylpyrimidine kinase activity"/>
    <property type="evidence" value="ECO:0007669"/>
    <property type="project" value="UniProtKB-EC"/>
</dbReference>
<dbReference type="GO" id="GO:0009228">
    <property type="term" value="P:thiamine biosynthetic process"/>
    <property type="evidence" value="ECO:0007669"/>
    <property type="project" value="UniProtKB-KW"/>
</dbReference>
<dbReference type="GO" id="GO:0009229">
    <property type="term" value="P:thiamine diphosphate biosynthetic process"/>
    <property type="evidence" value="ECO:0007669"/>
    <property type="project" value="UniProtKB-UniPathway"/>
</dbReference>
<dbReference type="CDD" id="cd01169">
    <property type="entry name" value="HMPP_kinase"/>
    <property type="match status" value="1"/>
</dbReference>
<dbReference type="FunFam" id="3.40.1190.20:FF:000003">
    <property type="entry name" value="Phosphomethylpyrimidine kinase ThiD"/>
    <property type="match status" value="1"/>
</dbReference>
<dbReference type="Gene3D" id="3.40.1190.20">
    <property type="match status" value="1"/>
</dbReference>
<dbReference type="InterPro" id="IPR004399">
    <property type="entry name" value="HMP/HMP-P_kinase_dom"/>
</dbReference>
<dbReference type="InterPro" id="IPR013749">
    <property type="entry name" value="PM/HMP-P_kinase-1"/>
</dbReference>
<dbReference type="InterPro" id="IPR029056">
    <property type="entry name" value="Ribokinase-like"/>
</dbReference>
<dbReference type="NCBIfam" id="TIGR00097">
    <property type="entry name" value="HMP-P_kinase"/>
    <property type="match status" value="1"/>
</dbReference>
<dbReference type="PANTHER" id="PTHR20858:SF17">
    <property type="entry name" value="HYDROXYMETHYLPYRIMIDINE_PHOSPHOMETHYLPYRIMIDINE KINASE THI20-RELATED"/>
    <property type="match status" value="1"/>
</dbReference>
<dbReference type="PANTHER" id="PTHR20858">
    <property type="entry name" value="PHOSPHOMETHYLPYRIMIDINE KINASE"/>
    <property type="match status" value="1"/>
</dbReference>
<dbReference type="Pfam" id="PF08543">
    <property type="entry name" value="Phos_pyr_kin"/>
    <property type="match status" value="1"/>
</dbReference>
<dbReference type="SUPFAM" id="SSF53613">
    <property type="entry name" value="Ribokinase-like"/>
    <property type="match status" value="1"/>
</dbReference>
<keyword id="KW-0067">ATP-binding</keyword>
<keyword id="KW-0418">Kinase</keyword>
<keyword id="KW-0547">Nucleotide-binding</keyword>
<keyword id="KW-1185">Reference proteome</keyword>
<keyword id="KW-0784">Thiamine biosynthesis</keyword>
<keyword id="KW-0808">Transferase</keyword>
<gene>
    <name type="primary">thiD</name>
    <name type="ordered locus">BQ2027_MB0430C</name>
</gene>
<name>THID_MYCBO</name>
<organism>
    <name type="scientific">Mycobacterium bovis (strain ATCC BAA-935 / AF2122/97)</name>
    <dbReference type="NCBI Taxonomy" id="233413"/>
    <lineage>
        <taxon>Bacteria</taxon>
        <taxon>Bacillati</taxon>
        <taxon>Actinomycetota</taxon>
        <taxon>Actinomycetes</taxon>
        <taxon>Mycobacteriales</taxon>
        <taxon>Mycobacteriaceae</taxon>
        <taxon>Mycobacterium</taxon>
        <taxon>Mycobacterium tuberculosis complex</taxon>
    </lineage>
</organism>
<feature type="chain" id="PRO_0000192024" description="Hydroxymethylpyrimidine/phosphomethylpyrimidine kinase">
    <location>
        <begin position="1"/>
        <end position="275"/>
    </location>
</feature>
<feature type="binding site" evidence="1">
    <location>
        <position position="54"/>
    </location>
    <ligand>
        <name>4-amino-5-hydroxymethyl-2-methylpyrimidine</name>
        <dbReference type="ChEBI" id="CHEBI:16892"/>
    </ligand>
</feature>
<evidence type="ECO:0000250" key="1"/>
<evidence type="ECO:0000250" key="2">
    <source>
        <dbReference type="UniProtKB" id="P76422"/>
    </source>
</evidence>
<evidence type="ECO:0000250" key="3">
    <source>
        <dbReference type="UniProtKB" id="P9WG77"/>
    </source>
</evidence>
<evidence type="ECO:0000305" key="4"/>
<sequence>MNYLPLAPPGMTPPRVLSIAGSDSGGGAGIQADMRTMALLGVHACVAVTAVTVQNTLGVKDIHEVPNDVVAGQIEAVVTDIGVQAAKTGMLASSRIVATVAATWRRLELSVPLVVDPVCASMHGDPLLAPSALDSLRGQLFPLATLLTPNLDEARLLVDIEVVDAESQRAAAKALHALGPQWVLVKGGHLRSSDGSCDLLYDGVSCYQFDAQRLPTGDDHGGGDTLATAIAAALAHGFTVPDAVDFGKRWVTECLRAAYPLGRGHGPVSPLFRLS</sequence>